<gene>
    <name type="primary">arfA</name>
    <name type="ordered locus">BQ2027_MB0923</name>
</gene>
<keyword id="KW-0998">Cell outer membrane</keyword>
<keyword id="KW-1015">Disulfide bond</keyword>
<keyword id="KW-0472">Membrane</keyword>
<keyword id="KW-1185">Reference proteome</keyword>
<keyword id="KW-0812">Transmembrane</keyword>
<keyword id="KW-1133">Transmembrane helix</keyword>
<feature type="chain" id="PRO_0000196260" description="Peptidoglycan-binding protein ArfA">
    <location>
        <begin position="1"/>
        <end position="326"/>
    </location>
</feature>
<feature type="transmembrane region" description="Helical" evidence="2">
    <location>
        <begin position="30"/>
        <end position="50"/>
    </location>
</feature>
<feature type="domain" description="BON">
    <location>
        <begin position="127"/>
        <end position="196"/>
    </location>
</feature>
<feature type="domain" description="OmpA-like" evidence="3">
    <location>
        <begin position="212"/>
        <end position="326"/>
    </location>
</feature>
<feature type="region of interest" description="Disordered" evidence="4">
    <location>
        <begin position="1"/>
        <end position="21"/>
    </location>
</feature>
<feature type="disulfide bond" evidence="1">
    <location>
        <begin position="208"/>
        <end position="250"/>
    </location>
</feature>
<dbReference type="EMBL" id="LT708304">
    <property type="protein sequence ID" value="SIT99521.1"/>
    <property type="molecule type" value="Genomic_DNA"/>
</dbReference>
<dbReference type="RefSeq" id="NP_854580.1">
    <property type="nucleotide sequence ID" value="NC_002945.3"/>
</dbReference>
<dbReference type="RefSeq" id="WP_003404684.1">
    <property type="nucleotide sequence ID" value="NC_002945.4"/>
</dbReference>
<dbReference type="BMRB" id="P65594"/>
<dbReference type="SMR" id="P65594"/>
<dbReference type="KEGG" id="mbo:BQ2027_MB0923"/>
<dbReference type="PATRIC" id="fig|233413.5.peg.1004"/>
<dbReference type="Proteomes" id="UP000001419">
    <property type="component" value="Chromosome"/>
</dbReference>
<dbReference type="GO" id="GO:0009279">
    <property type="term" value="C:cell outer membrane"/>
    <property type="evidence" value="ECO:0007669"/>
    <property type="project" value="UniProtKB-SubCell"/>
</dbReference>
<dbReference type="CDD" id="cd07185">
    <property type="entry name" value="OmpA_C-like"/>
    <property type="match status" value="1"/>
</dbReference>
<dbReference type="Gene3D" id="3.40.1520.20">
    <property type="match status" value="1"/>
</dbReference>
<dbReference type="Gene3D" id="3.30.1330.60">
    <property type="entry name" value="OmpA-like domain"/>
    <property type="match status" value="1"/>
</dbReference>
<dbReference type="InterPro" id="IPR054121">
    <property type="entry name" value="ArfA_BON-like"/>
</dbReference>
<dbReference type="InterPro" id="IPR050330">
    <property type="entry name" value="Bact_OuterMem_StrucFunc"/>
</dbReference>
<dbReference type="InterPro" id="IPR007055">
    <property type="entry name" value="BON_dom"/>
</dbReference>
<dbReference type="InterPro" id="IPR006664">
    <property type="entry name" value="OMP_bac"/>
</dbReference>
<dbReference type="InterPro" id="IPR006665">
    <property type="entry name" value="OmpA-like"/>
</dbReference>
<dbReference type="InterPro" id="IPR006690">
    <property type="entry name" value="OMPA-like_CS"/>
</dbReference>
<dbReference type="InterPro" id="IPR036737">
    <property type="entry name" value="OmpA-like_sf"/>
</dbReference>
<dbReference type="PANTHER" id="PTHR30329:SF21">
    <property type="entry name" value="LIPOPROTEIN YIAD-RELATED"/>
    <property type="match status" value="1"/>
</dbReference>
<dbReference type="PANTHER" id="PTHR30329">
    <property type="entry name" value="STATOR ELEMENT OF FLAGELLAR MOTOR COMPLEX"/>
    <property type="match status" value="1"/>
</dbReference>
<dbReference type="Pfam" id="PF04972">
    <property type="entry name" value="BON"/>
    <property type="match status" value="1"/>
</dbReference>
<dbReference type="Pfam" id="PF21923">
    <property type="entry name" value="BON_like"/>
    <property type="match status" value="1"/>
</dbReference>
<dbReference type="Pfam" id="PF00691">
    <property type="entry name" value="OmpA"/>
    <property type="match status" value="1"/>
</dbReference>
<dbReference type="PRINTS" id="PR01023">
    <property type="entry name" value="NAFLGMOTY"/>
</dbReference>
<dbReference type="PRINTS" id="PR01021">
    <property type="entry name" value="OMPADOMAIN"/>
</dbReference>
<dbReference type="SUPFAM" id="SSF103088">
    <property type="entry name" value="OmpA-like"/>
    <property type="match status" value="1"/>
</dbReference>
<dbReference type="PROSITE" id="PS01068">
    <property type="entry name" value="OMPA_1"/>
    <property type="match status" value="1"/>
</dbReference>
<dbReference type="PROSITE" id="PS51123">
    <property type="entry name" value="OMPA_2"/>
    <property type="match status" value="1"/>
</dbReference>
<sequence>MASKAGLGQTPATTDARRTQKFYRGSPGRPWLIGAVVIPLLIAAIGYGAFERPQSVTGPTGVLPTLTPTSTRGASALSLSLLSISRSGNTVTLIGDFPDEAAKAALMTALNGLLAPGVNVIDQIHVDPVVRSLDFSSAEPVFTASVPIPDFGLKVERDTVTLTGTAPSSEHKDAVKRAATSTWPDMKIVNNIEVTGQAPPGPPASGPCADLQSAINAVTGGPIAFGNDGASLIPADYEILNRVADKLKACPDARVTINGYTDNTGSEGINIPLSAQRAKIVADYLVARGVAGDHIATVGLGSVNPIASNATPEGRAKNRRVEIVVN</sequence>
<comment type="function">
    <text evidence="1">May play a role in ammonia secretion that neutralizes the medium at pH 5.5, although it does not play a direct role in ammonia transport. Binds peptidoglycan. Expression depends on arfB and arfC (By similarity).</text>
</comment>
<comment type="subcellular location">
    <subcellularLocation>
        <location evidence="1">Cell outer membrane</location>
    </subcellularLocation>
    <text evidence="1">Does not have a cleavable signal sequence.</text>
</comment>
<comment type="similarity">
    <text evidence="5">Belongs to the outer membrane OOP (TC 1.B.6) superfamily. ArfA family.</text>
</comment>
<accession>P65594</accession>
<accession>A0A1R3XWS0</accession>
<accession>Q10557</accession>
<accession>X2BG45</accession>
<organism>
    <name type="scientific">Mycobacterium bovis (strain ATCC BAA-935 / AF2122/97)</name>
    <dbReference type="NCBI Taxonomy" id="233413"/>
    <lineage>
        <taxon>Bacteria</taxon>
        <taxon>Bacillati</taxon>
        <taxon>Actinomycetota</taxon>
        <taxon>Actinomycetes</taxon>
        <taxon>Mycobacteriales</taxon>
        <taxon>Mycobacteriaceae</taxon>
        <taxon>Mycobacterium</taxon>
        <taxon>Mycobacterium tuberculosis complex</taxon>
    </lineage>
</organism>
<proteinExistence type="inferred from homology"/>
<protein>
    <recommendedName>
        <fullName>Peptidoglycan-binding protein ArfA</fullName>
    </recommendedName>
    <alternativeName>
        <fullName>Outer membrane protein ArfA</fullName>
    </alternativeName>
</protein>
<name>ARFA_MYCBO</name>
<evidence type="ECO:0000250" key="1"/>
<evidence type="ECO:0000255" key="2"/>
<evidence type="ECO:0000255" key="3">
    <source>
        <dbReference type="PROSITE-ProRule" id="PRU00473"/>
    </source>
</evidence>
<evidence type="ECO:0000256" key="4">
    <source>
        <dbReference type="SAM" id="MobiDB-lite"/>
    </source>
</evidence>
<evidence type="ECO:0000305" key="5"/>
<reference key="1">
    <citation type="journal article" date="2003" name="Proc. Natl. Acad. Sci. U.S.A.">
        <title>The complete genome sequence of Mycobacterium bovis.</title>
        <authorList>
            <person name="Garnier T."/>
            <person name="Eiglmeier K."/>
            <person name="Camus J.-C."/>
            <person name="Medina N."/>
            <person name="Mansoor H."/>
            <person name="Pryor M."/>
            <person name="Duthoy S."/>
            <person name="Grondin S."/>
            <person name="Lacroix C."/>
            <person name="Monsempe C."/>
            <person name="Simon S."/>
            <person name="Harris B."/>
            <person name="Atkin R."/>
            <person name="Doggett J."/>
            <person name="Mayes R."/>
            <person name="Keating L."/>
            <person name="Wheeler P.R."/>
            <person name="Parkhill J."/>
            <person name="Barrell B.G."/>
            <person name="Cole S.T."/>
            <person name="Gordon S.V."/>
            <person name="Hewinson R.G."/>
        </authorList>
    </citation>
    <scope>NUCLEOTIDE SEQUENCE [LARGE SCALE GENOMIC DNA]</scope>
    <source>
        <strain>ATCC BAA-935 / AF2122/97</strain>
    </source>
</reference>
<reference key="2">
    <citation type="journal article" date="2017" name="Genome Announc.">
        <title>Updated reference genome sequence and annotation of Mycobacterium bovis AF2122/97.</title>
        <authorList>
            <person name="Malone K.M."/>
            <person name="Farrell D."/>
            <person name="Stuber T.P."/>
            <person name="Schubert O.T."/>
            <person name="Aebersold R."/>
            <person name="Robbe-Austerman S."/>
            <person name="Gordon S.V."/>
        </authorList>
    </citation>
    <scope>NUCLEOTIDE SEQUENCE [LARGE SCALE GENOMIC DNA]</scope>
    <scope>GENOME REANNOTATION</scope>
    <source>
        <strain>ATCC BAA-935 / AF2122/97</strain>
    </source>
</reference>